<proteinExistence type="evidence at protein level"/>
<name>S2611_MOUSE</name>
<sequence>MAPDTCCCSATALRRRLPVLAWVPDYSLQWLRLDFIAGLSVGLTVIPQALAYAEVAGLPPQYGLYSAFMGCFVYFFLGTSRDVTLGPTAIMSLLVSFYTFREPAYAVLLAFLSGCIQLAMGLLHLGFLLDFISCPVIKGFTSAASITIGFGQIKNLLGLQKIPRQFFLQVYHTFLHIGETRVGDAVLGLASMLLLLVLKCMREHMPPPHPEMPLAVKFSRGLVWTVTTARNALVVSSAALIAYAFEVTGSHPFVLTGKIAEGLPPVRIPPFSVTRDNKTISFSEMVQDMGAGLAVVPLMGLLESIAVAKSFASQNNYRIDANQELLAIGLTNVLGSLVSSYPVTGSFGRTAVNAQTGVCTPAGGLVTGALVLLSLNYLTSLFSYIPKSALAAVIITAVTPLFDVKIFRSLWRVQRLDLLPLCVTFLLSFWEIQYGILAGSLVSLLILLHSVARPKTQVSEGQIFVLQPASGLYFPAIDALREAITNRALEASPPRSAVLECTHISSVDYTVIVGLGELLEDFQKKGVALAFVGLQVPVLRTLLAADLKGFRYFTTLEEAEKFLQQEPGTEPNSIHEDAVPEQRSSLLKSPSGP</sequence>
<comment type="function">
    <text evidence="1 2 8 9 10">Sodium-independent anion exchanger mediating bicarbonate, chloride, sulfate and oxalate transport (By similarity). Exhibits sodium-independent sulfate anion transporter activity that may cooperate with SLC26A2 to mediate DIDS-sensitive sulfate uptake into high endothelial venules endothelial cells (HEVEC) (By similarity). In the kidney, mediates chloride-bicarbonate exchange, facilitating V-ATPase-mediated acid secretion (PubMed:21716257). May function as a chloride channel, playing an important role in moderating chloride homeostasis and neuronal activity in the cerebellum (PubMed:23733100, PubMed:27390771).</text>
</comment>
<comment type="catalytic activity">
    <reaction evidence="8">
        <text>hydrogencarbonate(in) + chloride(out) = hydrogencarbonate(out) + chloride(in)</text>
        <dbReference type="Rhea" id="RHEA:72363"/>
        <dbReference type="ChEBI" id="CHEBI:17544"/>
        <dbReference type="ChEBI" id="CHEBI:17996"/>
    </reaction>
</comment>
<comment type="catalytic activity">
    <reaction evidence="1">
        <text>sulfate(in) + H(+)(in) = sulfate(out) + H(+)(out)</text>
        <dbReference type="Rhea" id="RHEA:28574"/>
        <dbReference type="ChEBI" id="CHEBI:15378"/>
        <dbReference type="ChEBI" id="CHEBI:16189"/>
    </reaction>
</comment>
<comment type="catalytic activity">
    <reaction evidence="1">
        <text>oxalate(in) + chloride(out) = oxalate(out) + chloride(in)</text>
        <dbReference type="Rhea" id="RHEA:72263"/>
        <dbReference type="ChEBI" id="CHEBI:17996"/>
        <dbReference type="ChEBI" id="CHEBI:30623"/>
    </reaction>
</comment>
<comment type="subcellular location">
    <subcellularLocation>
        <location evidence="9">Cell membrane</location>
        <topology evidence="3">Multi-pass membrane protein</topology>
    </subcellularLocation>
    <subcellularLocation>
        <location evidence="2">Lysosome membrane</location>
        <topology evidence="3">Multi-pass membrane protein</topology>
    </subcellularLocation>
    <subcellularLocation>
        <location evidence="8">Apical cell membrane</location>
        <topology evidence="3">Multi-pass membrane protein</topology>
    </subcellularLocation>
    <subcellularLocation>
        <location evidence="8">Basolateral cell membrane</location>
        <topology evidence="3">Multi-pass membrane protein</topology>
    </subcellularLocation>
</comment>
<comment type="alternative products">
    <event type="alternative splicing"/>
    <isoform>
        <id>Q80ZD3-1</id>
        <name evidence="6 7 11">1</name>
        <sequence type="displayed"/>
    </isoform>
    <isoform>
        <id>Q80ZD3-2</id>
        <name evidence="6 7">2</name>
        <sequence type="described" ref="VSP_052687 VSP_052688"/>
    </isoform>
</comment>
<comment type="tissue specificity">
    <text evidence="9">Abundantly expressed in the cerebellum, with a predominant expression in Purkinje cells (at protein level).</text>
</comment>
<comment type="tissue specificity">
    <molecule>Isoform 1</molecule>
    <text evidence="8">Predominantly expressed in the kidney and brain (PubMed:21716257). In the kidney localizes in collecting duct intercalated cells (at protein level) (PubMed:21716257).</text>
</comment>
<comment type="tissue specificity">
    <molecule>Isoform 2</molecule>
    <text evidence="8">Predominantly expressed in the brain with lower levels in the kidney.</text>
</comment>
<comment type="disruption phenotype">
    <text evidence="10">Conditional knockout from Purkinje cells (PCs) induces a negative shift in the reversal potential of chloride as reflected in the GABAA-receptor evoked currents, indicating a decrease in intracellular chloride concentration. Both in vitro and in vivo, PCs show a significantly increased action potential firing frequency of simple spikes. At the behavioral level, mice show deficits in locomotor activity.</text>
</comment>
<comment type="similarity">
    <text evidence="3">Belongs to the SLC26A/SulP transporter (TC 2.A.53) family.</text>
</comment>
<comment type="sequence caution" evidence="16">
    <conflict type="erroneous initiation">
        <sequence resource="EMBL-CDS" id="AAH38604"/>
    </conflict>
    <text>Extended N-terminus.</text>
</comment>
<accession>Q80ZD3</accession>
<accession>B2RQF3</accession>
<accession>Q8BTP1</accession>
<accession>Q8BWL3</accession>
<accession>Q8CHW8</accession>
<keyword id="KW-0025">Alternative splicing</keyword>
<keyword id="KW-0039">Anion exchange</keyword>
<keyword id="KW-1003">Cell membrane</keyword>
<keyword id="KW-0406">Ion transport</keyword>
<keyword id="KW-0458">Lysosome</keyword>
<keyword id="KW-0472">Membrane</keyword>
<keyword id="KW-1185">Reference proteome</keyword>
<keyword id="KW-0812">Transmembrane</keyword>
<keyword id="KW-1133">Transmembrane helix</keyword>
<keyword id="KW-0813">Transport</keyword>
<protein>
    <recommendedName>
        <fullName>Sodium-independent sulfate anion transporter</fullName>
    </recommendedName>
    <alternativeName>
        <fullName evidence="14 15">Kidney brain anion transporter</fullName>
        <shortName evidence="14 15">KBAT</shortName>
    </alternativeName>
    <alternativeName>
        <fullName>Solute carrier family 26 member 11</fullName>
    </alternativeName>
</protein>
<evidence type="ECO:0000250" key="1">
    <source>
        <dbReference type="UniProtKB" id="G3C7W6"/>
    </source>
</evidence>
<evidence type="ECO:0000250" key="2">
    <source>
        <dbReference type="UniProtKB" id="Q86WA9"/>
    </source>
</evidence>
<evidence type="ECO:0000255" key="3"/>
<evidence type="ECO:0000255" key="4">
    <source>
        <dbReference type="PROSITE-ProRule" id="PRU00198"/>
    </source>
</evidence>
<evidence type="ECO:0000256" key="5">
    <source>
        <dbReference type="SAM" id="MobiDB-lite"/>
    </source>
</evidence>
<evidence type="ECO:0000269" key="6">
    <source>
    </source>
</evidence>
<evidence type="ECO:0000269" key="7">
    <source>
    </source>
</evidence>
<evidence type="ECO:0000269" key="8">
    <source>
    </source>
</evidence>
<evidence type="ECO:0000269" key="9">
    <source>
    </source>
</evidence>
<evidence type="ECO:0000269" key="10">
    <source>
    </source>
</evidence>
<evidence type="ECO:0000269" key="11">
    <source ref="1"/>
</evidence>
<evidence type="ECO:0000303" key="12">
    <source>
    </source>
</evidence>
<evidence type="ECO:0000303" key="13">
    <source>
    </source>
</evidence>
<evidence type="ECO:0000303" key="14">
    <source>
    </source>
</evidence>
<evidence type="ECO:0000303" key="15">
    <source>
    </source>
</evidence>
<evidence type="ECO:0000305" key="16"/>
<evidence type="ECO:0000312" key="17">
    <source>
        <dbReference type="EMBL" id="AAH38604.1"/>
    </source>
</evidence>
<evidence type="ECO:0000312" key="18">
    <source>
        <dbReference type="EMBL" id="AAI32494.1"/>
    </source>
</evidence>
<evidence type="ECO:0000312" key="19">
    <source>
        <dbReference type="EMBL" id="AAO49173.1"/>
    </source>
</evidence>
<evidence type="ECO:0000312" key="20">
    <source>
        <dbReference type="EMBL" id="BAC34882.1"/>
    </source>
</evidence>
<evidence type="ECO:0000312" key="21">
    <source>
        <dbReference type="EMBL" id="BAC40782.1"/>
    </source>
</evidence>
<evidence type="ECO:0000312" key="22">
    <source>
        <dbReference type="MGI" id="MGI:2444589"/>
    </source>
</evidence>
<gene>
    <name evidence="22" type="primary">Slc26a11</name>
</gene>
<reference evidence="16 19" key="1">
    <citation type="submission" date="2001-02" db="EMBL/GenBank/DDBJ databases">
        <title>Characterization of Mus musculus Slc26a11, a putative anion exchanger.</title>
        <authorList>
            <person name="Mount D.B."/>
        </authorList>
    </citation>
    <scope>NUCLEOTIDE SEQUENCE [MRNA] (ISOFORM 1)</scope>
    <source>
        <strain evidence="19">C57BL/6J</strain>
    </source>
</reference>
<reference evidence="16 21" key="2">
    <citation type="journal article" date="2005" name="Science">
        <title>The transcriptional landscape of the mammalian genome.</title>
        <authorList>
            <person name="Carninci P."/>
            <person name="Kasukawa T."/>
            <person name="Katayama S."/>
            <person name="Gough J."/>
            <person name="Frith M.C."/>
            <person name="Maeda N."/>
            <person name="Oyama R."/>
            <person name="Ravasi T."/>
            <person name="Lenhard B."/>
            <person name="Wells C."/>
            <person name="Kodzius R."/>
            <person name="Shimokawa K."/>
            <person name="Bajic V.B."/>
            <person name="Brenner S.E."/>
            <person name="Batalov S."/>
            <person name="Forrest A.R."/>
            <person name="Zavolan M."/>
            <person name="Davis M.J."/>
            <person name="Wilming L.G."/>
            <person name="Aidinis V."/>
            <person name="Allen J.E."/>
            <person name="Ambesi-Impiombato A."/>
            <person name="Apweiler R."/>
            <person name="Aturaliya R.N."/>
            <person name="Bailey T.L."/>
            <person name="Bansal M."/>
            <person name="Baxter L."/>
            <person name="Beisel K.W."/>
            <person name="Bersano T."/>
            <person name="Bono H."/>
            <person name="Chalk A.M."/>
            <person name="Chiu K.P."/>
            <person name="Choudhary V."/>
            <person name="Christoffels A."/>
            <person name="Clutterbuck D.R."/>
            <person name="Crowe M.L."/>
            <person name="Dalla E."/>
            <person name="Dalrymple B.P."/>
            <person name="de Bono B."/>
            <person name="Della Gatta G."/>
            <person name="di Bernardo D."/>
            <person name="Down T."/>
            <person name="Engstrom P."/>
            <person name="Fagiolini M."/>
            <person name="Faulkner G."/>
            <person name="Fletcher C.F."/>
            <person name="Fukushima T."/>
            <person name="Furuno M."/>
            <person name="Futaki S."/>
            <person name="Gariboldi M."/>
            <person name="Georgii-Hemming P."/>
            <person name="Gingeras T.R."/>
            <person name="Gojobori T."/>
            <person name="Green R.E."/>
            <person name="Gustincich S."/>
            <person name="Harbers M."/>
            <person name="Hayashi Y."/>
            <person name="Hensch T.K."/>
            <person name="Hirokawa N."/>
            <person name="Hill D."/>
            <person name="Huminiecki L."/>
            <person name="Iacono M."/>
            <person name="Ikeo K."/>
            <person name="Iwama A."/>
            <person name="Ishikawa T."/>
            <person name="Jakt M."/>
            <person name="Kanapin A."/>
            <person name="Katoh M."/>
            <person name="Kawasawa Y."/>
            <person name="Kelso J."/>
            <person name="Kitamura H."/>
            <person name="Kitano H."/>
            <person name="Kollias G."/>
            <person name="Krishnan S.P."/>
            <person name="Kruger A."/>
            <person name="Kummerfeld S.K."/>
            <person name="Kurochkin I.V."/>
            <person name="Lareau L.F."/>
            <person name="Lazarevic D."/>
            <person name="Lipovich L."/>
            <person name="Liu J."/>
            <person name="Liuni S."/>
            <person name="McWilliam S."/>
            <person name="Madan Babu M."/>
            <person name="Madera M."/>
            <person name="Marchionni L."/>
            <person name="Matsuda H."/>
            <person name="Matsuzawa S."/>
            <person name="Miki H."/>
            <person name="Mignone F."/>
            <person name="Miyake S."/>
            <person name="Morris K."/>
            <person name="Mottagui-Tabar S."/>
            <person name="Mulder N."/>
            <person name="Nakano N."/>
            <person name="Nakauchi H."/>
            <person name="Ng P."/>
            <person name="Nilsson R."/>
            <person name="Nishiguchi S."/>
            <person name="Nishikawa S."/>
            <person name="Nori F."/>
            <person name="Ohara O."/>
            <person name="Okazaki Y."/>
            <person name="Orlando V."/>
            <person name="Pang K.C."/>
            <person name="Pavan W.J."/>
            <person name="Pavesi G."/>
            <person name="Pesole G."/>
            <person name="Petrovsky N."/>
            <person name="Piazza S."/>
            <person name="Reed J."/>
            <person name="Reid J.F."/>
            <person name="Ring B.Z."/>
            <person name="Ringwald M."/>
            <person name="Rost B."/>
            <person name="Ruan Y."/>
            <person name="Salzberg S.L."/>
            <person name="Sandelin A."/>
            <person name="Schneider C."/>
            <person name="Schoenbach C."/>
            <person name="Sekiguchi K."/>
            <person name="Semple C.A."/>
            <person name="Seno S."/>
            <person name="Sessa L."/>
            <person name="Sheng Y."/>
            <person name="Shibata Y."/>
            <person name="Shimada H."/>
            <person name="Shimada K."/>
            <person name="Silva D."/>
            <person name="Sinclair B."/>
            <person name="Sperling S."/>
            <person name="Stupka E."/>
            <person name="Sugiura K."/>
            <person name="Sultana R."/>
            <person name="Takenaka Y."/>
            <person name="Taki K."/>
            <person name="Tammoja K."/>
            <person name="Tan S.L."/>
            <person name="Tang S."/>
            <person name="Taylor M.S."/>
            <person name="Tegner J."/>
            <person name="Teichmann S.A."/>
            <person name="Ueda H.R."/>
            <person name="van Nimwegen E."/>
            <person name="Verardo R."/>
            <person name="Wei C.L."/>
            <person name="Yagi K."/>
            <person name="Yamanishi H."/>
            <person name="Zabarovsky E."/>
            <person name="Zhu S."/>
            <person name="Zimmer A."/>
            <person name="Hide W."/>
            <person name="Bult C."/>
            <person name="Grimmond S.M."/>
            <person name="Teasdale R.D."/>
            <person name="Liu E.T."/>
            <person name="Brusic V."/>
            <person name="Quackenbush J."/>
            <person name="Wahlestedt C."/>
            <person name="Mattick J.S."/>
            <person name="Hume D.A."/>
            <person name="Kai C."/>
            <person name="Sasaki D."/>
            <person name="Tomaru Y."/>
            <person name="Fukuda S."/>
            <person name="Kanamori-Katayama M."/>
            <person name="Suzuki M."/>
            <person name="Aoki J."/>
            <person name="Arakawa T."/>
            <person name="Iida J."/>
            <person name="Imamura K."/>
            <person name="Itoh M."/>
            <person name="Kato T."/>
            <person name="Kawaji H."/>
            <person name="Kawagashira N."/>
            <person name="Kawashima T."/>
            <person name="Kojima M."/>
            <person name="Kondo S."/>
            <person name="Konno H."/>
            <person name="Nakano K."/>
            <person name="Ninomiya N."/>
            <person name="Nishio T."/>
            <person name="Okada M."/>
            <person name="Plessy C."/>
            <person name="Shibata K."/>
            <person name="Shiraki T."/>
            <person name="Suzuki S."/>
            <person name="Tagami M."/>
            <person name="Waki K."/>
            <person name="Watahiki A."/>
            <person name="Okamura-Oho Y."/>
            <person name="Suzuki H."/>
            <person name="Kawai J."/>
            <person name="Hayashizaki Y."/>
        </authorList>
    </citation>
    <scope>NUCLEOTIDE SEQUENCE [LARGE SCALE MRNA] (ISOFORMS 1 AND 2)</scope>
    <source>
        <strain evidence="20">C57BL/6J</strain>
        <strain evidence="21">NOD</strain>
        <tissue evidence="21">Dendritic cell</tissue>
        <tissue evidence="20">Embryonic heart</tissue>
    </source>
</reference>
<reference evidence="16 17" key="3">
    <citation type="journal article" date="2004" name="Genome Res.">
        <title>The status, quality, and expansion of the NIH full-length cDNA project: the Mammalian Gene Collection (MGC).</title>
        <authorList>
            <consortium name="The MGC Project Team"/>
        </authorList>
    </citation>
    <scope>NUCLEOTIDE SEQUENCE [LARGE SCALE MRNA] (ISOFORMS 1 AND 2)</scope>
    <source>
        <strain evidence="17">FVB/N</strain>
        <tissue evidence="18">Brain</tissue>
        <tissue evidence="17">Salivary gland</tissue>
    </source>
</reference>
<reference key="4">
    <citation type="journal article" date="2013" name="Pflugers Arch.">
        <title>Slc26a11 is prominently expressed in the brain and functions as a chloride channel: expression in Purkinje cells and stimulation of V H(+)-ATPase.</title>
        <authorList>
            <person name="Rahmati N."/>
            <person name="Kunzelmann K."/>
            <person name="Xu J."/>
            <person name="Barone S."/>
            <person name="Sirianant L."/>
            <person name="De Zeeuw C.I."/>
            <person name="Soleimani M."/>
        </authorList>
    </citation>
    <scope>FUNCTION</scope>
    <scope>SUBCELLULAR LOCATION</scope>
    <scope>TISSUE SPECIFICITY</scope>
</reference>
<reference key="5">
    <citation type="journal article" date="2011" name="Kidney Int.">
        <title>Slc26a11, a chloride transporter, localizes with the vacuolar H(+)-ATPase of A-intercalated cells of the kidney.</title>
        <authorList>
            <person name="Xu J."/>
            <person name="Barone S."/>
            <person name="Li H."/>
            <person name="Holiday S."/>
            <person name="Zahedi K."/>
            <person name="Soleimani M."/>
        </authorList>
    </citation>
    <scope>FUNCTION</scope>
    <scope>TRANSPORTER ACTIVITY</scope>
    <scope>SUBCELLULAR LOCATION</scope>
    <scope>TISSUE SPECIFICITY (ISOFORMS 1 AND 2)</scope>
</reference>
<reference key="6">
    <citation type="journal article" date="2016" name="ENeuro">
        <title>SLC26A11 (KBAT) in Purkinje Cells Is Critical for Inhibitory Transmission and Contributes to Locomotor Coordination.</title>
        <authorList>
            <person name="Rahmati N."/>
            <person name="Vinueza Veloz M.F."/>
            <person name="Xu J."/>
            <person name="Barone S."/>
            <person name="Rodolfo Ben Hamida N."/>
            <person name="Schonewille M."/>
            <person name="Hoebeek F.E."/>
            <person name="Soleimani M."/>
            <person name="De Zeeuw C.I."/>
        </authorList>
    </citation>
    <scope>FUNCTION</scope>
    <scope>DISRUPTION PHENOTYPE</scope>
</reference>
<feature type="chain" id="PRO_0000320687" description="Sodium-independent sulfate anion transporter">
    <location>
        <begin position="1"/>
        <end position="593"/>
    </location>
</feature>
<feature type="topological domain" description="Extracellular" evidence="3">
    <location>
        <begin position="1"/>
        <end position="34"/>
    </location>
</feature>
<feature type="transmembrane region" description="Helical" evidence="3">
    <location>
        <begin position="35"/>
        <end position="55"/>
    </location>
</feature>
<feature type="topological domain" description="Cytoplasmic" evidence="3">
    <location>
        <position position="56"/>
    </location>
</feature>
<feature type="transmembrane region" description="Helical" evidence="3">
    <location>
        <begin position="57"/>
        <end position="77"/>
    </location>
</feature>
<feature type="topological domain" description="Extracellular" evidence="3">
    <location>
        <begin position="78"/>
        <end position="82"/>
    </location>
</feature>
<feature type="transmembrane region" description="Helical" evidence="3">
    <location>
        <begin position="83"/>
        <end position="100"/>
    </location>
</feature>
<feature type="topological domain" description="Cytoplasmic" evidence="3">
    <location>
        <begin position="101"/>
        <end position="106"/>
    </location>
</feature>
<feature type="transmembrane region" description="Helical" evidence="3">
    <location>
        <begin position="107"/>
        <end position="127"/>
    </location>
</feature>
<feature type="topological domain" description="Extracellular" evidence="3">
    <location>
        <begin position="128"/>
        <end position="176"/>
    </location>
</feature>
<feature type="transmembrane region" description="Helical" evidence="3">
    <location>
        <begin position="177"/>
        <end position="197"/>
    </location>
</feature>
<feature type="topological domain" description="Cytoplasmic" evidence="3">
    <location>
        <begin position="198"/>
        <end position="233"/>
    </location>
</feature>
<feature type="transmembrane region" description="Helical" evidence="3">
    <location>
        <begin position="234"/>
        <end position="254"/>
    </location>
</feature>
<feature type="topological domain" description="Extracellular" evidence="3">
    <location>
        <begin position="255"/>
        <end position="287"/>
    </location>
</feature>
<feature type="transmembrane region" description="Helical" evidence="3">
    <location>
        <begin position="288"/>
        <end position="308"/>
    </location>
</feature>
<feature type="topological domain" description="Cytoplasmic" evidence="3">
    <location>
        <begin position="309"/>
        <end position="324"/>
    </location>
</feature>
<feature type="transmembrane region" description="Helical" evidence="3">
    <location>
        <begin position="325"/>
        <end position="345"/>
    </location>
</feature>
<feature type="topological domain" description="Extracellular" evidence="3">
    <location>
        <begin position="346"/>
        <end position="361"/>
    </location>
</feature>
<feature type="transmembrane region" description="Helical" evidence="3">
    <location>
        <begin position="362"/>
        <end position="382"/>
    </location>
</feature>
<feature type="topological domain" description="Cytoplasmic" evidence="3">
    <location>
        <position position="383"/>
    </location>
</feature>
<feature type="transmembrane region" description="Helical" evidence="3">
    <location>
        <begin position="384"/>
        <end position="404"/>
    </location>
</feature>
<feature type="topological domain" description="Extracellular" evidence="3">
    <location>
        <begin position="405"/>
        <end position="417"/>
    </location>
</feature>
<feature type="transmembrane region" description="Helical" evidence="3">
    <location>
        <begin position="418"/>
        <end position="438"/>
    </location>
</feature>
<feature type="topological domain" description="Cytoplasmic" evidence="3">
    <location>
        <begin position="439"/>
        <end position="593"/>
    </location>
</feature>
<feature type="domain" description="STAS" evidence="4">
    <location>
        <begin position="453"/>
        <end position="566"/>
    </location>
</feature>
<feature type="region of interest" description="Disordered" evidence="5">
    <location>
        <begin position="564"/>
        <end position="593"/>
    </location>
</feature>
<feature type="compositionally biased region" description="Polar residues" evidence="5">
    <location>
        <begin position="582"/>
        <end position="593"/>
    </location>
</feature>
<feature type="splice variant" id="VSP_052687" description="In isoform 2." evidence="12 13">
    <original>MAPDTCCC</original>
    <variation>MHAPTPVC</variation>
    <location>
        <begin position="1"/>
        <end position="8"/>
    </location>
</feature>
<feature type="splice variant" id="VSP_052688" description="In isoform 2." evidence="12 13">
    <location>
        <begin position="9"/>
        <end position="180"/>
    </location>
</feature>
<feature type="sequence conflict" description="In Ref. 3; AAH38604." evidence="16" ref="3">
    <original>A</original>
    <variation>S</variation>
    <location>
        <position position="37"/>
    </location>
</feature>
<feature type="sequence conflict" description="In Ref. 1; AAO49173." evidence="16" ref="1">
    <original>M</original>
    <variation>V</variation>
    <location>
        <position position="205"/>
    </location>
</feature>
<feature type="sequence conflict" description="In Ref. 1; AAO49173." evidence="16" ref="1">
    <original>A</original>
    <variation>T</variation>
    <location>
        <position position="369"/>
    </location>
</feature>
<feature type="sequence conflict" description="In Ref. 1; AAO49173." evidence="16" ref="1">
    <original>T</original>
    <variation>A</variation>
    <location>
        <position position="396"/>
    </location>
</feature>
<feature type="sequence conflict" description="In Ref. 2; BAC40782." evidence="16" ref="2">
    <original>E</original>
    <variation>G</variation>
    <location>
        <position position="500"/>
    </location>
</feature>
<organism>
    <name type="scientific">Mus musculus</name>
    <name type="common">Mouse</name>
    <dbReference type="NCBI Taxonomy" id="10090"/>
    <lineage>
        <taxon>Eukaryota</taxon>
        <taxon>Metazoa</taxon>
        <taxon>Chordata</taxon>
        <taxon>Craniata</taxon>
        <taxon>Vertebrata</taxon>
        <taxon>Euteleostomi</taxon>
        <taxon>Mammalia</taxon>
        <taxon>Eutheria</taxon>
        <taxon>Euarchontoglires</taxon>
        <taxon>Glires</taxon>
        <taxon>Rodentia</taxon>
        <taxon>Myomorpha</taxon>
        <taxon>Muroidea</taxon>
        <taxon>Muridae</taxon>
        <taxon>Murinae</taxon>
        <taxon>Mus</taxon>
        <taxon>Mus</taxon>
    </lineage>
</organism>
<dbReference type="EMBL" id="AF345196">
    <property type="protein sequence ID" value="AAO49173.1"/>
    <property type="molecule type" value="mRNA"/>
</dbReference>
<dbReference type="EMBL" id="AK052202">
    <property type="protein sequence ID" value="BAC34882.1"/>
    <property type="molecule type" value="mRNA"/>
</dbReference>
<dbReference type="EMBL" id="AK089182">
    <property type="protein sequence ID" value="BAC40782.1"/>
    <property type="molecule type" value="mRNA"/>
</dbReference>
<dbReference type="EMBL" id="BC038604">
    <property type="protein sequence ID" value="AAH38604.1"/>
    <property type="status" value="ALT_INIT"/>
    <property type="molecule type" value="mRNA"/>
</dbReference>
<dbReference type="EMBL" id="BC132493">
    <property type="protein sequence ID" value="AAI32494.1"/>
    <property type="molecule type" value="mRNA"/>
</dbReference>
<dbReference type="EMBL" id="BC137897">
    <property type="protein sequence ID" value="AAI37898.1"/>
    <property type="molecule type" value="mRNA"/>
</dbReference>
<dbReference type="CCDS" id="CCDS25717.1">
    <molecule id="Q80ZD3-1"/>
</dbReference>
<dbReference type="RefSeq" id="NP_848858.2">
    <molecule id="Q80ZD3-1"/>
    <property type="nucleotide sequence ID" value="NM_178743.3"/>
</dbReference>
<dbReference type="RefSeq" id="XP_006533484.1">
    <molecule id="Q80ZD3-2"/>
    <property type="nucleotide sequence ID" value="XM_006533421.3"/>
</dbReference>
<dbReference type="RefSeq" id="XP_036012615.1">
    <molecule id="Q80ZD3-1"/>
    <property type="nucleotide sequence ID" value="XM_036156722.1"/>
</dbReference>
<dbReference type="SMR" id="Q80ZD3"/>
<dbReference type="FunCoup" id="Q80ZD3">
    <property type="interactions" value="459"/>
</dbReference>
<dbReference type="STRING" id="10090.ENSMUSP00000050999"/>
<dbReference type="iPTMnet" id="Q80ZD3"/>
<dbReference type="PhosphoSitePlus" id="Q80ZD3"/>
<dbReference type="SwissPalm" id="Q80ZD3"/>
<dbReference type="PaxDb" id="10090-ENSMUSP00000050999"/>
<dbReference type="PeptideAtlas" id="Q80ZD3"/>
<dbReference type="ProteomicsDB" id="256869">
    <molecule id="Q80ZD3-1"/>
</dbReference>
<dbReference type="ProteomicsDB" id="256870">
    <molecule id="Q80ZD3-2"/>
</dbReference>
<dbReference type="Antibodypedia" id="32732">
    <property type="antibodies" value="37 antibodies from 11 providers"/>
</dbReference>
<dbReference type="DNASU" id="268512"/>
<dbReference type="Ensembl" id="ENSMUST00000050880.8">
    <molecule id="Q80ZD3-1"/>
    <property type="protein sequence ID" value="ENSMUSP00000050999.8"/>
    <property type="gene ID" value="ENSMUSG00000039908.15"/>
</dbReference>
<dbReference type="GeneID" id="268512"/>
<dbReference type="KEGG" id="mmu:268512"/>
<dbReference type="UCSC" id="uc007mqm.1">
    <molecule id="Q80ZD3-1"/>
    <property type="organism name" value="mouse"/>
</dbReference>
<dbReference type="UCSC" id="uc007mqn.1">
    <molecule id="Q80ZD3-2"/>
    <property type="organism name" value="mouse"/>
</dbReference>
<dbReference type="AGR" id="MGI:2444589"/>
<dbReference type="CTD" id="284129"/>
<dbReference type="MGI" id="MGI:2444589">
    <property type="gene designation" value="Slc26a11"/>
</dbReference>
<dbReference type="VEuPathDB" id="HostDB:ENSMUSG00000039908"/>
<dbReference type="eggNOG" id="KOG0236">
    <property type="taxonomic scope" value="Eukaryota"/>
</dbReference>
<dbReference type="GeneTree" id="ENSGT01120000271864"/>
<dbReference type="HOGENOM" id="CLU_003182_12_2_1"/>
<dbReference type="InParanoid" id="Q80ZD3"/>
<dbReference type="OMA" id="IPETAGF"/>
<dbReference type="OrthoDB" id="288203at2759"/>
<dbReference type="PhylomeDB" id="Q80ZD3"/>
<dbReference type="TreeFam" id="TF323537"/>
<dbReference type="Reactome" id="R-MMU-427601">
    <property type="pathway name" value="Multifunctional anion exchangers"/>
</dbReference>
<dbReference type="BioGRID-ORCS" id="268512">
    <property type="hits" value="1 hit in 79 CRISPR screens"/>
</dbReference>
<dbReference type="ChiTaRS" id="Slc26a11">
    <property type="organism name" value="mouse"/>
</dbReference>
<dbReference type="PRO" id="PR:Q80ZD3"/>
<dbReference type="Proteomes" id="UP000000589">
    <property type="component" value="Chromosome 11"/>
</dbReference>
<dbReference type="RNAct" id="Q80ZD3">
    <property type="molecule type" value="protein"/>
</dbReference>
<dbReference type="Bgee" id="ENSMUSG00000039908">
    <property type="expression patterns" value="Expressed in granulocyte and 193 other cell types or tissues"/>
</dbReference>
<dbReference type="GO" id="GO:0016324">
    <property type="term" value="C:apical plasma membrane"/>
    <property type="evidence" value="ECO:0000314"/>
    <property type="project" value="UniProtKB"/>
</dbReference>
<dbReference type="GO" id="GO:0016323">
    <property type="term" value="C:basolateral plasma membrane"/>
    <property type="evidence" value="ECO:0000314"/>
    <property type="project" value="UniProtKB"/>
</dbReference>
<dbReference type="GO" id="GO:0005783">
    <property type="term" value="C:endoplasmic reticulum"/>
    <property type="evidence" value="ECO:0000250"/>
    <property type="project" value="UniProtKB"/>
</dbReference>
<dbReference type="GO" id="GO:0005794">
    <property type="term" value="C:Golgi apparatus"/>
    <property type="evidence" value="ECO:0000250"/>
    <property type="project" value="UniProtKB"/>
</dbReference>
<dbReference type="GO" id="GO:0005765">
    <property type="term" value="C:lysosomal membrane"/>
    <property type="evidence" value="ECO:0000250"/>
    <property type="project" value="UniProtKB"/>
</dbReference>
<dbReference type="GO" id="GO:0016020">
    <property type="term" value="C:membrane"/>
    <property type="evidence" value="ECO:0000250"/>
    <property type="project" value="UniProtKB"/>
</dbReference>
<dbReference type="GO" id="GO:0005654">
    <property type="term" value="C:nucleoplasm"/>
    <property type="evidence" value="ECO:0007669"/>
    <property type="project" value="Ensembl"/>
</dbReference>
<dbReference type="GO" id="GO:0005886">
    <property type="term" value="C:plasma membrane"/>
    <property type="evidence" value="ECO:0000314"/>
    <property type="project" value="UniProtKB"/>
</dbReference>
<dbReference type="GO" id="GO:0005254">
    <property type="term" value="F:chloride channel activity"/>
    <property type="evidence" value="ECO:0000314"/>
    <property type="project" value="UniProtKB"/>
</dbReference>
<dbReference type="GO" id="GO:0140900">
    <property type="term" value="F:chloride:bicarbonate antiporter activity"/>
    <property type="evidence" value="ECO:0000314"/>
    <property type="project" value="UniProtKB"/>
</dbReference>
<dbReference type="GO" id="GO:0008509">
    <property type="term" value="F:monoatomic anion transmembrane transporter activity"/>
    <property type="evidence" value="ECO:0000250"/>
    <property type="project" value="UniProtKB"/>
</dbReference>
<dbReference type="GO" id="GO:0008271">
    <property type="term" value="F:secondary active sulfate transmembrane transporter activity"/>
    <property type="evidence" value="ECO:0007669"/>
    <property type="project" value="InterPro"/>
</dbReference>
<dbReference type="GO" id="GO:0019532">
    <property type="term" value="P:oxalate transport"/>
    <property type="evidence" value="ECO:0000250"/>
    <property type="project" value="UniProtKB"/>
</dbReference>
<dbReference type="GO" id="GO:1902358">
    <property type="term" value="P:sulfate transmembrane transport"/>
    <property type="evidence" value="ECO:0000250"/>
    <property type="project" value="UniProtKB"/>
</dbReference>
<dbReference type="CDD" id="cd07042">
    <property type="entry name" value="STAS_SulP_like_sulfate_transporter"/>
    <property type="match status" value="1"/>
</dbReference>
<dbReference type="FunFam" id="3.30.750.24:FF:000013">
    <property type="entry name" value="Solute carrier family 26 member 11"/>
    <property type="match status" value="1"/>
</dbReference>
<dbReference type="Gene3D" id="3.30.750.24">
    <property type="entry name" value="STAS domain"/>
    <property type="match status" value="1"/>
</dbReference>
<dbReference type="InterPro" id="IPR018045">
    <property type="entry name" value="S04_transporter_CS"/>
</dbReference>
<dbReference type="InterPro" id="IPR011547">
    <property type="entry name" value="SLC26A/SulP_dom"/>
</dbReference>
<dbReference type="InterPro" id="IPR001902">
    <property type="entry name" value="SLC26A/SulP_fam"/>
</dbReference>
<dbReference type="InterPro" id="IPR002645">
    <property type="entry name" value="STAS_dom"/>
</dbReference>
<dbReference type="InterPro" id="IPR036513">
    <property type="entry name" value="STAS_dom_sf"/>
</dbReference>
<dbReference type="PANTHER" id="PTHR11814">
    <property type="entry name" value="SULFATE TRANSPORTER"/>
    <property type="match status" value="1"/>
</dbReference>
<dbReference type="Pfam" id="PF01740">
    <property type="entry name" value="STAS"/>
    <property type="match status" value="1"/>
</dbReference>
<dbReference type="Pfam" id="PF00916">
    <property type="entry name" value="Sulfate_transp"/>
    <property type="match status" value="1"/>
</dbReference>
<dbReference type="SUPFAM" id="SSF52091">
    <property type="entry name" value="SpoIIaa-like"/>
    <property type="match status" value="1"/>
</dbReference>
<dbReference type="PROSITE" id="PS01130">
    <property type="entry name" value="SLC26A"/>
    <property type="match status" value="1"/>
</dbReference>
<dbReference type="PROSITE" id="PS50801">
    <property type="entry name" value="STAS"/>
    <property type="match status" value="1"/>
</dbReference>